<dbReference type="EC" id="7.1.2.2" evidence="1"/>
<dbReference type="EMBL" id="CP000085">
    <property type="protein sequence ID" value="ABC34646.1"/>
    <property type="molecule type" value="Genomic_DNA"/>
</dbReference>
<dbReference type="SMR" id="Q2T880"/>
<dbReference type="KEGG" id="bte:BTH_II0419"/>
<dbReference type="HOGENOM" id="CLU_022398_0_2_4"/>
<dbReference type="Proteomes" id="UP000001930">
    <property type="component" value="Chromosome II"/>
</dbReference>
<dbReference type="GO" id="GO:0005886">
    <property type="term" value="C:plasma membrane"/>
    <property type="evidence" value="ECO:0007669"/>
    <property type="project" value="UniProtKB-SubCell"/>
</dbReference>
<dbReference type="GO" id="GO:0045259">
    <property type="term" value="C:proton-transporting ATP synthase complex"/>
    <property type="evidence" value="ECO:0007669"/>
    <property type="project" value="UniProtKB-KW"/>
</dbReference>
<dbReference type="GO" id="GO:0005524">
    <property type="term" value="F:ATP binding"/>
    <property type="evidence" value="ECO:0007669"/>
    <property type="project" value="UniProtKB-UniRule"/>
</dbReference>
<dbReference type="GO" id="GO:0016887">
    <property type="term" value="F:ATP hydrolysis activity"/>
    <property type="evidence" value="ECO:0007669"/>
    <property type="project" value="InterPro"/>
</dbReference>
<dbReference type="GO" id="GO:0046933">
    <property type="term" value="F:proton-transporting ATP synthase activity, rotational mechanism"/>
    <property type="evidence" value="ECO:0007669"/>
    <property type="project" value="UniProtKB-UniRule"/>
</dbReference>
<dbReference type="CDD" id="cd18110">
    <property type="entry name" value="ATP-synt_F1_beta_C"/>
    <property type="match status" value="1"/>
</dbReference>
<dbReference type="CDD" id="cd01133">
    <property type="entry name" value="F1-ATPase_beta_CD"/>
    <property type="match status" value="1"/>
</dbReference>
<dbReference type="Gene3D" id="2.40.10.170">
    <property type="match status" value="1"/>
</dbReference>
<dbReference type="Gene3D" id="1.10.1140.10">
    <property type="entry name" value="Bovine Mitochondrial F1-atpase, Atp Synthase Beta Chain, Chain D, domain 3"/>
    <property type="match status" value="1"/>
</dbReference>
<dbReference type="Gene3D" id="3.40.50.300">
    <property type="entry name" value="P-loop containing nucleotide triphosphate hydrolases"/>
    <property type="match status" value="1"/>
</dbReference>
<dbReference type="HAMAP" id="MF_01347">
    <property type="entry name" value="ATP_synth_beta_bact"/>
    <property type="match status" value="1"/>
</dbReference>
<dbReference type="InterPro" id="IPR003593">
    <property type="entry name" value="AAA+_ATPase"/>
</dbReference>
<dbReference type="InterPro" id="IPR055190">
    <property type="entry name" value="ATP-synt_VA_C"/>
</dbReference>
<dbReference type="InterPro" id="IPR005722">
    <property type="entry name" value="ATP_synth_F1_bsu"/>
</dbReference>
<dbReference type="InterPro" id="IPR020003">
    <property type="entry name" value="ATPase_a/bsu_AS"/>
</dbReference>
<dbReference type="InterPro" id="IPR050053">
    <property type="entry name" value="ATPase_alpha/beta_chains"/>
</dbReference>
<dbReference type="InterPro" id="IPR004100">
    <property type="entry name" value="ATPase_F1/V1/A1_a/bsu_N"/>
</dbReference>
<dbReference type="InterPro" id="IPR036121">
    <property type="entry name" value="ATPase_F1/V1/A1_a/bsu_N_sf"/>
</dbReference>
<dbReference type="InterPro" id="IPR000194">
    <property type="entry name" value="ATPase_F1/V1/A1_a/bsu_nucl-bd"/>
</dbReference>
<dbReference type="InterPro" id="IPR024034">
    <property type="entry name" value="ATPase_F1/V1_b/a_C"/>
</dbReference>
<dbReference type="InterPro" id="IPR027417">
    <property type="entry name" value="P-loop_NTPase"/>
</dbReference>
<dbReference type="NCBIfam" id="TIGR01039">
    <property type="entry name" value="atpD"/>
    <property type="match status" value="1"/>
</dbReference>
<dbReference type="PANTHER" id="PTHR15184">
    <property type="entry name" value="ATP SYNTHASE"/>
    <property type="match status" value="1"/>
</dbReference>
<dbReference type="PANTHER" id="PTHR15184:SF71">
    <property type="entry name" value="ATP SYNTHASE SUBUNIT BETA, MITOCHONDRIAL"/>
    <property type="match status" value="1"/>
</dbReference>
<dbReference type="Pfam" id="PF00006">
    <property type="entry name" value="ATP-synt_ab"/>
    <property type="match status" value="1"/>
</dbReference>
<dbReference type="Pfam" id="PF02874">
    <property type="entry name" value="ATP-synt_ab_N"/>
    <property type="match status" value="1"/>
</dbReference>
<dbReference type="Pfam" id="PF22919">
    <property type="entry name" value="ATP-synt_VA_C"/>
    <property type="match status" value="1"/>
</dbReference>
<dbReference type="SMART" id="SM00382">
    <property type="entry name" value="AAA"/>
    <property type="match status" value="1"/>
</dbReference>
<dbReference type="SUPFAM" id="SSF47917">
    <property type="entry name" value="C-terminal domain of alpha and beta subunits of F1 ATP synthase"/>
    <property type="match status" value="1"/>
</dbReference>
<dbReference type="SUPFAM" id="SSF50615">
    <property type="entry name" value="N-terminal domain of alpha and beta subunits of F1 ATP synthase"/>
    <property type="match status" value="1"/>
</dbReference>
<dbReference type="SUPFAM" id="SSF52540">
    <property type="entry name" value="P-loop containing nucleoside triphosphate hydrolases"/>
    <property type="match status" value="1"/>
</dbReference>
<dbReference type="PROSITE" id="PS00152">
    <property type="entry name" value="ATPASE_ALPHA_BETA"/>
    <property type="match status" value="1"/>
</dbReference>
<sequence>MGATVADLQATNGTAQAQAKHGVSDGRVVAVRGAVVDVAFDGGVLPALNDALVIPIDGAAPILAEVHAHLSDAAVRALALGPTGGLRRGAAVRATGGPIRVPVGDAVLGRLLSVTGEPGDDGAALAADVARRPIHRGAPPLAEQKSATALFATGIKVIDLLAPLAQGGKAAMFGGAGVGKTVLVMELIHAMVERYRGISVFAGIGERSREGHEMLLDMRGSGVLGRTVLVYGQMNEPPGARWRVPLTALAIAEYFRDERAQNVLLLMDNVFRFVQAGAEVSGLLGRLPSRVGYQPTLASEVAALQERIASVEGAAVTAIEAVYVPADDFTDPAVTAIAAHVDSMVVLSRAMAAEGMYPAIDPVASSSILLDPLVVGEAHVEVAIEVRRVIEHYRELQDVIALLGIDELGADDRRIVGRARRLQRFLTQPFAVTEAFTGQAGASVEIADTIAGCRAILRGDCDDWRESSLYMVGTLDDARRKEEAAREADARRDAAAGAASGSAGPQGAQHGR</sequence>
<protein>
    <recommendedName>
        <fullName evidence="1">ATP synthase subunit beta 2</fullName>
        <ecNumber evidence="1">7.1.2.2</ecNumber>
    </recommendedName>
    <alternativeName>
        <fullName evidence="1">ATP synthase F1 sector subunit beta 2</fullName>
    </alternativeName>
    <alternativeName>
        <fullName evidence="1">F-ATPase subunit beta 2</fullName>
    </alternativeName>
</protein>
<evidence type="ECO:0000255" key="1">
    <source>
        <dbReference type="HAMAP-Rule" id="MF_01347"/>
    </source>
</evidence>
<evidence type="ECO:0000256" key="2">
    <source>
        <dbReference type="SAM" id="MobiDB-lite"/>
    </source>
</evidence>
<proteinExistence type="inferred from homology"/>
<name>ATPB2_BURTA</name>
<gene>
    <name evidence="1" type="primary">atpD2</name>
    <name type="ordered locus">BTH_II0419</name>
</gene>
<reference key="1">
    <citation type="journal article" date="2005" name="BMC Genomics">
        <title>Bacterial genome adaptation to niches: divergence of the potential virulence genes in three Burkholderia species of different survival strategies.</title>
        <authorList>
            <person name="Kim H.S."/>
            <person name="Schell M.A."/>
            <person name="Yu Y."/>
            <person name="Ulrich R.L."/>
            <person name="Sarria S.H."/>
            <person name="Nierman W.C."/>
            <person name="DeShazer D."/>
        </authorList>
    </citation>
    <scope>NUCLEOTIDE SEQUENCE [LARGE SCALE GENOMIC DNA]</scope>
    <source>
        <strain>ATCC 700388 / DSM 13276 / CCUG 48851 / CIP 106301 / E264</strain>
    </source>
</reference>
<organism>
    <name type="scientific">Burkholderia thailandensis (strain ATCC 700388 / DSM 13276 / CCUG 48851 / CIP 106301 / E264)</name>
    <dbReference type="NCBI Taxonomy" id="271848"/>
    <lineage>
        <taxon>Bacteria</taxon>
        <taxon>Pseudomonadati</taxon>
        <taxon>Pseudomonadota</taxon>
        <taxon>Betaproteobacteria</taxon>
        <taxon>Burkholderiales</taxon>
        <taxon>Burkholderiaceae</taxon>
        <taxon>Burkholderia</taxon>
        <taxon>pseudomallei group</taxon>
    </lineage>
</organism>
<feature type="chain" id="PRO_0000339498" description="ATP synthase subunit beta 2">
    <location>
        <begin position="1"/>
        <end position="512"/>
    </location>
</feature>
<feature type="region of interest" description="Disordered" evidence="2">
    <location>
        <begin position="479"/>
        <end position="512"/>
    </location>
</feature>
<feature type="compositionally biased region" description="Basic and acidic residues" evidence="2">
    <location>
        <begin position="479"/>
        <end position="494"/>
    </location>
</feature>
<feature type="binding site" evidence="1">
    <location>
        <begin position="174"/>
        <end position="181"/>
    </location>
    <ligand>
        <name>ATP</name>
        <dbReference type="ChEBI" id="CHEBI:30616"/>
    </ligand>
</feature>
<comment type="function">
    <text evidence="1">Produces ATP from ADP in the presence of a proton gradient across the membrane. The catalytic sites are hosted primarily by the beta subunits.</text>
</comment>
<comment type="catalytic activity">
    <reaction evidence="1">
        <text>ATP + H2O + 4 H(+)(in) = ADP + phosphate + 5 H(+)(out)</text>
        <dbReference type="Rhea" id="RHEA:57720"/>
        <dbReference type="ChEBI" id="CHEBI:15377"/>
        <dbReference type="ChEBI" id="CHEBI:15378"/>
        <dbReference type="ChEBI" id="CHEBI:30616"/>
        <dbReference type="ChEBI" id="CHEBI:43474"/>
        <dbReference type="ChEBI" id="CHEBI:456216"/>
        <dbReference type="EC" id="7.1.2.2"/>
    </reaction>
</comment>
<comment type="subunit">
    <text evidence="1">F-type ATPases have 2 components, CF(1) - the catalytic core - and CF(0) - the membrane proton channel. CF(1) has five subunits: alpha(3), beta(3), gamma(1), delta(1), epsilon(1). CF(0) has three main subunits: a(1), b(2) and c(9-12). The alpha and beta chains form an alternating ring which encloses part of the gamma chain. CF(1) is attached to CF(0) by a central stalk formed by the gamma and epsilon chains, while a peripheral stalk is formed by the delta and b chains.</text>
</comment>
<comment type="subcellular location">
    <subcellularLocation>
        <location evidence="1">Cell inner membrane</location>
        <topology evidence="1">Peripheral membrane protein</topology>
    </subcellularLocation>
</comment>
<comment type="similarity">
    <text evidence="1">Belongs to the ATPase alpha/beta chains family.</text>
</comment>
<keyword id="KW-0066">ATP synthesis</keyword>
<keyword id="KW-0067">ATP-binding</keyword>
<keyword id="KW-0997">Cell inner membrane</keyword>
<keyword id="KW-1003">Cell membrane</keyword>
<keyword id="KW-0139">CF(1)</keyword>
<keyword id="KW-0375">Hydrogen ion transport</keyword>
<keyword id="KW-0406">Ion transport</keyword>
<keyword id="KW-0472">Membrane</keyword>
<keyword id="KW-0547">Nucleotide-binding</keyword>
<keyword id="KW-1278">Translocase</keyword>
<keyword id="KW-0813">Transport</keyword>
<accession>Q2T880</accession>